<name>COBQ_MYCVP</name>
<gene>
    <name evidence="1" type="primary">cobQ</name>
    <name type="ordered locus">Mvan_0377</name>
</gene>
<keyword id="KW-0169">Cobalamin biosynthesis</keyword>
<keyword id="KW-0315">Glutamine amidotransferase</keyword>
<reference key="1">
    <citation type="submission" date="2006-12" db="EMBL/GenBank/DDBJ databases">
        <title>Complete sequence of Mycobacterium vanbaalenii PYR-1.</title>
        <authorList>
            <consortium name="US DOE Joint Genome Institute"/>
            <person name="Copeland A."/>
            <person name="Lucas S."/>
            <person name="Lapidus A."/>
            <person name="Barry K."/>
            <person name="Detter J.C."/>
            <person name="Glavina del Rio T."/>
            <person name="Hammon N."/>
            <person name="Israni S."/>
            <person name="Dalin E."/>
            <person name="Tice H."/>
            <person name="Pitluck S."/>
            <person name="Singan V."/>
            <person name="Schmutz J."/>
            <person name="Larimer F."/>
            <person name="Land M."/>
            <person name="Hauser L."/>
            <person name="Kyrpides N."/>
            <person name="Anderson I.J."/>
            <person name="Miller C."/>
            <person name="Richardson P."/>
        </authorList>
    </citation>
    <scope>NUCLEOTIDE SEQUENCE [LARGE SCALE GENOMIC DNA]</scope>
    <source>
        <strain>DSM 7251 / JCM 13017 / BCRC 16820 / KCTC 9966 / NRRL B-24157 / PYR-1</strain>
    </source>
</reference>
<protein>
    <recommendedName>
        <fullName evidence="1">Cobyric acid synthase</fullName>
    </recommendedName>
</protein>
<sequence length="490" mass="51715">MTGLLIAGTTSDAGKTAVTTGLCRALARRGLKVAPYKAQNMSNNSMVCAGDDGGVEIGRAQWVQALAARATPEAAMNPVLLKPGSDRRSHVVLMGRPWGHVSSSDWLEGRRALAAAAHAAYDDLAGRYDVIVAEGAGSPTEINLRAGDYVNLGLARHAGLPTVVVGDIDRGGVFAAFFGTVALLSPEDQALIAGFVVNKFRGDPALLAPGLRDLERLTGRRVYGTLPWHPDLWLDSEDALELQGRRSARPGARRVAVVRLPRISNFTDVDAFGLEPDLDVVFASHPSALADADLVVLPGTRSTIADLAWLRSRGLDRAVLAHAAAGRPVLGICGGFQMLGRVIRDPHGVEGGTSEADGLGLLDIETDFVADKALRLPEGQWEATSASGYEIHHGRITPGPGGDEFPGGVRCGPVFGTMWHGAFEGDALRARFLTETLGVPASGASFPKAREDRIDLLGDLVEEHLDVDALLRLAEHAPPQGLPFLPPGSP</sequence>
<dbReference type="EMBL" id="CP000511">
    <property type="protein sequence ID" value="ABM11225.1"/>
    <property type="molecule type" value="Genomic_DNA"/>
</dbReference>
<dbReference type="RefSeq" id="WP_011777698.1">
    <property type="nucleotide sequence ID" value="NC_008726.1"/>
</dbReference>
<dbReference type="STRING" id="350058.Mvan_0377"/>
<dbReference type="KEGG" id="mva:Mvan_0377"/>
<dbReference type="eggNOG" id="COG1492">
    <property type="taxonomic scope" value="Bacteria"/>
</dbReference>
<dbReference type="HOGENOM" id="CLU_019250_2_2_11"/>
<dbReference type="UniPathway" id="UPA00148"/>
<dbReference type="Proteomes" id="UP000009159">
    <property type="component" value="Chromosome"/>
</dbReference>
<dbReference type="GO" id="GO:0015420">
    <property type="term" value="F:ABC-type vitamin B12 transporter activity"/>
    <property type="evidence" value="ECO:0007669"/>
    <property type="project" value="UniProtKB-UniRule"/>
</dbReference>
<dbReference type="GO" id="GO:0003824">
    <property type="term" value="F:catalytic activity"/>
    <property type="evidence" value="ECO:0007669"/>
    <property type="project" value="InterPro"/>
</dbReference>
<dbReference type="GO" id="GO:0009236">
    <property type="term" value="P:cobalamin biosynthetic process"/>
    <property type="evidence" value="ECO:0007669"/>
    <property type="project" value="UniProtKB-UniRule"/>
</dbReference>
<dbReference type="CDD" id="cd05389">
    <property type="entry name" value="CobQ_N"/>
    <property type="match status" value="1"/>
</dbReference>
<dbReference type="CDD" id="cd01750">
    <property type="entry name" value="GATase1_CobQ"/>
    <property type="match status" value="1"/>
</dbReference>
<dbReference type="Gene3D" id="3.40.50.880">
    <property type="match status" value="1"/>
</dbReference>
<dbReference type="Gene3D" id="3.40.50.300">
    <property type="entry name" value="P-loop containing nucleotide triphosphate hydrolases"/>
    <property type="match status" value="1"/>
</dbReference>
<dbReference type="HAMAP" id="MF_00028">
    <property type="entry name" value="CobQ"/>
    <property type="match status" value="1"/>
</dbReference>
<dbReference type="InterPro" id="IPR029062">
    <property type="entry name" value="Class_I_gatase-like"/>
</dbReference>
<dbReference type="InterPro" id="IPR002586">
    <property type="entry name" value="CobQ/CobB/MinD/ParA_Nub-bd_dom"/>
</dbReference>
<dbReference type="InterPro" id="IPR033949">
    <property type="entry name" value="CobQ_GATase1"/>
</dbReference>
<dbReference type="InterPro" id="IPR047045">
    <property type="entry name" value="CobQ_N"/>
</dbReference>
<dbReference type="InterPro" id="IPR004459">
    <property type="entry name" value="CobQ_synth"/>
</dbReference>
<dbReference type="InterPro" id="IPR011698">
    <property type="entry name" value="GATase_3"/>
</dbReference>
<dbReference type="InterPro" id="IPR027417">
    <property type="entry name" value="P-loop_NTPase"/>
</dbReference>
<dbReference type="NCBIfam" id="TIGR00313">
    <property type="entry name" value="cobQ"/>
    <property type="match status" value="1"/>
</dbReference>
<dbReference type="NCBIfam" id="NF001989">
    <property type="entry name" value="PRK00784.1"/>
    <property type="match status" value="1"/>
</dbReference>
<dbReference type="PANTHER" id="PTHR21343:SF1">
    <property type="entry name" value="COBYRIC ACID SYNTHASE"/>
    <property type="match status" value="1"/>
</dbReference>
<dbReference type="PANTHER" id="PTHR21343">
    <property type="entry name" value="DETHIOBIOTIN SYNTHETASE"/>
    <property type="match status" value="1"/>
</dbReference>
<dbReference type="Pfam" id="PF01656">
    <property type="entry name" value="CbiA"/>
    <property type="match status" value="1"/>
</dbReference>
<dbReference type="Pfam" id="PF07685">
    <property type="entry name" value="GATase_3"/>
    <property type="match status" value="1"/>
</dbReference>
<dbReference type="SUPFAM" id="SSF52317">
    <property type="entry name" value="Class I glutamine amidotransferase-like"/>
    <property type="match status" value="1"/>
</dbReference>
<dbReference type="SUPFAM" id="SSF52540">
    <property type="entry name" value="P-loop containing nucleoside triphosphate hydrolases"/>
    <property type="match status" value="1"/>
</dbReference>
<dbReference type="PROSITE" id="PS51274">
    <property type="entry name" value="GATASE_COBBQ"/>
    <property type="match status" value="1"/>
</dbReference>
<evidence type="ECO:0000255" key="1">
    <source>
        <dbReference type="HAMAP-Rule" id="MF_00028"/>
    </source>
</evidence>
<feature type="chain" id="PRO_0000332356" description="Cobyric acid synthase">
    <location>
        <begin position="1"/>
        <end position="490"/>
    </location>
</feature>
<feature type="domain" description="GATase cobBQ-type" evidence="1">
    <location>
        <begin position="252"/>
        <end position="428"/>
    </location>
</feature>
<feature type="active site" description="Nucleophile" evidence="1">
    <location>
        <position position="333"/>
    </location>
</feature>
<feature type="active site" evidence="1">
    <location>
        <position position="420"/>
    </location>
</feature>
<comment type="function">
    <text evidence="1">Catalyzes amidations at positions B, D, E, and G on adenosylcobyrinic A,C-diamide. NH(2) groups are provided by glutamine, and one molecule of ATP is hydrogenolyzed for each amidation.</text>
</comment>
<comment type="pathway">
    <text evidence="1">Cofactor biosynthesis; adenosylcobalamin biosynthesis.</text>
</comment>
<comment type="similarity">
    <text evidence="1">Belongs to the CobB/CobQ family. CobQ subfamily.</text>
</comment>
<proteinExistence type="inferred from homology"/>
<organism>
    <name type="scientific">Mycolicibacterium vanbaalenii (strain DSM 7251 / JCM 13017 / BCRC 16820 / KCTC 9966 / NRRL B-24157 / PYR-1)</name>
    <name type="common">Mycobacterium vanbaalenii</name>
    <dbReference type="NCBI Taxonomy" id="350058"/>
    <lineage>
        <taxon>Bacteria</taxon>
        <taxon>Bacillati</taxon>
        <taxon>Actinomycetota</taxon>
        <taxon>Actinomycetes</taxon>
        <taxon>Mycobacteriales</taxon>
        <taxon>Mycobacteriaceae</taxon>
        <taxon>Mycolicibacterium</taxon>
    </lineage>
</organism>
<accession>A1T225</accession>